<proteinExistence type="inferred from homology"/>
<reference key="1">
    <citation type="journal article" date="1998" name="DNA Res.">
        <title>Structural analysis of Arabidopsis thaliana chromosome 5. VI. Sequence features of the regions of 1,367,185 bp covered by 19 physically assigned P1 and TAC clones.</title>
        <authorList>
            <person name="Kotani H."/>
            <person name="Nakamura Y."/>
            <person name="Sato S."/>
            <person name="Asamizu E."/>
            <person name="Kaneko T."/>
            <person name="Miyajima N."/>
            <person name="Tabata S."/>
        </authorList>
    </citation>
    <scope>NUCLEOTIDE SEQUENCE [LARGE SCALE GENOMIC DNA]</scope>
    <source>
        <strain>cv. Columbia</strain>
    </source>
</reference>
<reference key="2">
    <citation type="journal article" date="2017" name="Plant J.">
        <title>Araport11: a complete reannotation of the Arabidopsis thaliana reference genome.</title>
        <authorList>
            <person name="Cheng C.Y."/>
            <person name="Krishnakumar V."/>
            <person name="Chan A.P."/>
            <person name="Thibaud-Nissen F."/>
            <person name="Schobel S."/>
            <person name="Town C.D."/>
        </authorList>
    </citation>
    <scope>GENOME REANNOTATION</scope>
    <source>
        <strain>cv. Columbia</strain>
    </source>
</reference>
<reference key="3">
    <citation type="journal article" date="2004" name="Carbohydr. Res.">
        <title>Pectin methylesterases: sequence-structural features and phylogenetic relationships.</title>
        <authorList>
            <person name="Markovic O."/>
            <person name="Janecek S."/>
        </authorList>
    </citation>
    <scope>GENE FAMILY</scope>
    <scope>NOMENCLATURE</scope>
</reference>
<sequence length="338" mass="37324">MGYNYVSLIVTILLVVITSPVVFGNDAAPIPENKGRIEQWFNTNVKQNGRGHFKTITEAINSVRAGNTRRVIIKIGPGVYKEKVTIDRSKPFITLYGHPNAMPVLTFDGTAAQYGTVDSATLIVLSDYFMAVNIILKNSAPMPDGKRKGAQALSMRISGNKAAFYNCKFYGYQDTICDDTGNHFFKDCYIEGTFDFIFGSGRSLYLGTQLNVVGDGIRVITAHAGKSAAEKSGYSFVHCKVTGTGTGIYLGRSWMSHPKVVYAYTDMSSVVNPSGWQENREAGRDKTVFYGEYKCTGTGSHKEKRVKYTQDIDDIEAKYFISLGYIQGSSWLLPPPSF</sequence>
<accession>Q9FKF3</accession>
<dbReference type="EC" id="3.1.1.11"/>
<dbReference type="EMBL" id="AB012239">
    <property type="protein sequence ID" value="BAB09012.1"/>
    <property type="status" value="ALT_SEQ"/>
    <property type="molecule type" value="Genomic_DNA"/>
</dbReference>
<dbReference type="EMBL" id="CP002688">
    <property type="status" value="NOT_ANNOTATED_CDS"/>
    <property type="molecule type" value="Genomic_DNA"/>
</dbReference>
<dbReference type="RefSeq" id="NP_001318857.1">
    <property type="nucleotide sequence ID" value="NM_001345486.1"/>
</dbReference>
<dbReference type="SMR" id="Q9FKF3"/>
<dbReference type="FunCoup" id="Q9FKF3">
    <property type="interactions" value="144"/>
</dbReference>
<dbReference type="STRING" id="3702.Q9FKF3"/>
<dbReference type="PaxDb" id="3702-AT5G61680.1"/>
<dbReference type="GeneID" id="836290"/>
<dbReference type="KEGG" id="ath:AT5G61680"/>
<dbReference type="Araport" id="AT5G61680"/>
<dbReference type="TAIR" id="AT5G61680"/>
<dbReference type="eggNOG" id="ENOG502R3C8">
    <property type="taxonomic scope" value="Eukaryota"/>
</dbReference>
<dbReference type="HOGENOM" id="CLU_012243_3_3_1"/>
<dbReference type="InParanoid" id="Q9FKF3"/>
<dbReference type="PhylomeDB" id="Q9FKF3"/>
<dbReference type="BioCyc" id="ARA:AT5G61680-MONOMER"/>
<dbReference type="UniPathway" id="UPA00545">
    <property type="reaction ID" value="UER00823"/>
</dbReference>
<dbReference type="PRO" id="PR:Q9FKF3"/>
<dbReference type="Proteomes" id="UP000006548">
    <property type="component" value="Chromosome 5"/>
</dbReference>
<dbReference type="ExpressionAtlas" id="Q9FKF3">
    <property type="expression patterns" value="baseline and differential"/>
</dbReference>
<dbReference type="GO" id="GO:0005576">
    <property type="term" value="C:extracellular region"/>
    <property type="evidence" value="ECO:0007669"/>
    <property type="project" value="UniProtKB-KW"/>
</dbReference>
<dbReference type="GO" id="GO:0030599">
    <property type="term" value="F:pectinesterase activity"/>
    <property type="evidence" value="ECO:0000318"/>
    <property type="project" value="GO_Central"/>
</dbReference>
<dbReference type="GO" id="GO:0042545">
    <property type="term" value="P:cell wall modification"/>
    <property type="evidence" value="ECO:0007669"/>
    <property type="project" value="InterPro"/>
</dbReference>
<dbReference type="GO" id="GO:0045490">
    <property type="term" value="P:pectin catabolic process"/>
    <property type="evidence" value="ECO:0000318"/>
    <property type="project" value="GO_Central"/>
</dbReference>
<dbReference type="FunFam" id="2.160.20.10:FF:000008">
    <property type="entry name" value="Pectinesterase"/>
    <property type="match status" value="1"/>
</dbReference>
<dbReference type="Gene3D" id="2.160.20.10">
    <property type="entry name" value="Single-stranded right-handed beta-helix, Pectin lyase-like"/>
    <property type="match status" value="1"/>
</dbReference>
<dbReference type="InterPro" id="IPR012334">
    <property type="entry name" value="Pectin_lyas_fold"/>
</dbReference>
<dbReference type="InterPro" id="IPR011050">
    <property type="entry name" value="Pectin_lyase_fold/virulence"/>
</dbReference>
<dbReference type="InterPro" id="IPR000070">
    <property type="entry name" value="Pectinesterase_cat"/>
</dbReference>
<dbReference type="PANTHER" id="PTHR31321">
    <property type="entry name" value="ACYL-COA THIOESTER HYDROLASE YBHC-RELATED"/>
    <property type="match status" value="1"/>
</dbReference>
<dbReference type="PANTHER" id="PTHR31321:SF87">
    <property type="entry name" value="PECTINESTERASE 63-RELATED"/>
    <property type="match status" value="1"/>
</dbReference>
<dbReference type="Pfam" id="PF01095">
    <property type="entry name" value="Pectinesterase"/>
    <property type="match status" value="1"/>
</dbReference>
<dbReference type="SUPFAM" id="SSF51126">
    <property type="entry name" value="Pectin lyase-like"/>
    <property type="match status" value="1"/>
</dbReference>
<protein>
    <recommendedName>
        <fullName>Putative pectinesterase 63</fullName>
        <shortName>PE 63</shortName>
        <ecNumber>3.1.1.11</ecNumber>
    </recommendedName>
    <alternativeName>
        <fullName>Pectin methylesterase 63</fullName>
        <shortName>AtPME63</shortName>
    </alternativeName>
</protein>
<feature type="signal peptide" evidence="2">
    <location>
        <begin position="1"/>
        <end position="24"/>
    </location>
</feature>
<feature type="chain" id="PRO_0000371708" description="Putative pectinesterase 63">
    <location>
        <begin position="25"/>
        <end position="338"/>
    </location>
</feature>
<feature type="active site" description="Proton donor" evidence="1">
    <location>
        <position position="174"/>
    </location>
</feature>
<feature type="active site" description="Nucleophile" evidence="1">
    <location>
        <position position="195"/>
    </location>
</feature>
<feature type="binding site" evidence="1">
    <location>
        <position position="116"/>
    </location>
    <ligand>
        <name>substrate</name>
    </ligand>
</feature>
<feature type="binding site" evidence="1">
    <location>
        <position position="151"/>
    </location>
    <ligand>
        <name>substrate</name>
    </ligand>
</feature>
<feature type="binding site" evidence="1">
    <location>
        <position position="252"/>
    </location>
    <ligand>
        <name>substrate</name>
    </ligand>
</feature>
<feature type="site" description="Transition state stabilizer" evidence="1">
    <location>
        <position position="173"/>
    </location>
</feature>
<comment type="function">
    <text evidence="1">Acts in the modification of cell walls via demethylesterification of cell wall pectin.</text>
</comment>
<comment type="catalytic activity">
    <reaction>
        <text>[(1-&gt;4)-alpha-D-galacturonosyl methyl ester](n) + n H2O = [(1-&gt;4)-alpha-D-galacturonosyl](n) + n methanol + n H(+)</text>
        <dbReference type="Rhea" id="RHEA:22380"/>
        <dbReference type="Rhea" id="RHEA-COMP:14570"/>
        <dbReference type="Rhea" id="RHEA-COMP:14573"/>
        <dbReference type="ChEBI" id="CHEBI:15377"/>
        <dbReference type="ChEBI" id="CHEBI:15378"/>
        <dbReference type="ChEBI" id="CHEBI:17790"/>
        <dbReference type="ChEBI" id="CHEBI:140522"/>
        <dbReference type="ChEBI" id="CHEBI:140523"/>
        <dbReference type="EC" id="3.1.1.11"/>
    </reaction>
</comment>
<comment type="pathway">
    <text>Glycan metabolism; pectin degradation; 2-dehydro-3-deoxy-D-gluconate from pectin: step 1/5.</text>
</comment>
<comment type="subcellular location">
    <subcellularLocation>
        <location evidence="1">Secreted</location>
        <location evidence="1">Cell wall</location>
    </subcellularLocation>
</comment>
<comment type="similarity">
    <text evidence="3">Belongs to the pectinesterase family.</text>
</comment>
<comment type="sequence caution" evidence="3">
    <conflict type="erroneous gene model prediction">
        <sequence resource="EMBL-CDS" id="BAB09012"/>
    </conflict>
</comment>
<gene>
    <name type="primary">PME63</name>
    <name type="synonym">ARATH63</name>
    <name type="ordered locus">At5g61680</name>
    <name type="ORF">K11J9.6</name>
</gene>
<organism>
    <name type="scientific">Arabidopsis thaliana</name>
    <name type="common">Mouse-ear cress</name>
    <dbReference type="NCBI Taxonomy" id="3702"/>
    <lineage>
        <taxon>Eukaryota</taxon>
        <taxon>Viridiplantae</taxon>
        <taxon>Streptophyta</taxon>
        <taxon>Embryophyta</taxon>
        <taxon>Tracheophyta</taxon>
        <taxon>Spermatophyta</taxon>
        <taxon>Magnoliopsida</taxon>
        <taxon>eudicotyledons</taxon>
        <taxon>Gunneridae</taxon>
        <taxon>Pentapetalae</taxon>
        <taxon>rosids</taxon>
        <taxon>malvids</taxon>
        <taxon>Brassicales</taxon>
        <taxon>Brassicaceae</taxon>
        <taxon>Camelineae</taxon>
        <taxon>Arabidopsis</taxon>
    </lineage>
</organism>
<evidence type="ECO:0000250" key="1"/>
<evidence type="ECO:0000255" key="2"/>
<evidence type="ECO:0000305" key="3"/>
<keyword id="KW-0063">Aspartyl esterase</keyword>
<keyword id="KW-0134">Cell wall</keyword>
<keyword id="KW-0961">Cell wall biogenesis/degradation</keyword>
<keyword id="KW-0378">Hydrolase</keyword>
<keyword id="KW-1185">Reference proteome</keyword>
<keyword id="KW-0964">Secreted</keyword>
<keyword id="KW-0732">Signal</keyword>
<name>PME63_ARATH</name>